<protein>
    <recommendedName>
        <fullName evidence="1">Deoxyribose-phosphate aldolase</fullName>
        <shortName evidence="1">DERA</shortName>
        <ecNumber evidence="1">4.1.2.4</ecNumber>
    </recommendedName>
    <alternativeName>
        <fullName evidence="1">2-deoxy-D-ribose 5-phosphate aldolase</fullName>
    </alternativeName>
    <alternativeName>
        <fullName evidence="1">Phosphodeoxyriboaldolase</fullName>
        <shortName evidence="1">Deoxyriboaldolase</shortName>
    </alternativeName>
</protein>
<accession>Q6KHA7</accession>
<dbReference type="EC" id="4.1.2.4" evidence="1"/>
<dbReference type="EMBL" id="AE017308">
    <property type="protein sequence ID" value="AAT28023.1"/>
    <property type="molecule type" value="Genomic_DNA"/>
</dbReference>
<dbReference type="RefSeq" id="WP_011265057.1">
    <property type="nucleotide sequence ID" value="NC_006908.1"/>
</dbReference>
<dbReference type="SMR" id="Q6KHA7"/>
<dbReference type="STRING" id="267748.MMOB5370"/>
<dbReference type="KEGG" id="mmo:MMOB5370"/>
<dbReference type="eggNOG" id="COG0274">
    <property type="taxonomic scope" value="Bacteria"/>
</dbReference>
<dbReference type="HOGENOM" id="CLU_053595_0_2_14"/>
<dbReference type="OrthoDB" id="9778711at2"/>
<dbReference type="UniPathway" id="UPA00002">
    <property type="reaction ID" value="UER00468"/>
</dbReference>
<dbReference type="Proteomes" id="UP000009072">
    <property type="component" value="Chromosome"/>
</dbReference>
<dbReference type="GO" id="GO:0005737">
    <property type="term" value="C:cytoplasm"/>
    <property type="evidence" value="ECO:0007669"/>
    <property type="project" value="UniProtKB-SubCell"/>
</dbReference>
<dbReference type="GO" id="GO:0004139">
    <property type="term" value="F:deoxyribose-phosphate aldolase activity"/>
    <property type="evidence" value="ECO:0007669"/>
    <property type="project" value="UniProtKB-UniRule"/>
</dbReference>
<dbReference type="GO" id="GO:0006018">
    <property type="term" value="P:2-deoxyribose 1-phosphate catabolic process"/>
    <property type="evidence" value="ECO:0007669"/>
    <property type="project" value="UniProtKB-UniRule"/>
</dbReference>
<dbReference type="GO" id="GO:0016052">
    <property type="term" value="P:carbohydrate catabolic process"/>
    <property type="evidence" value="ECO:0007669"/>
    <property type="project" value="TreeGrafter"/>
</dbReference>
<dbReference type="GO" id="GO:0009264">
    <property type="term" value="P:deoxyribonucleotide catabolic process"/>
    <property type="evidence" value="ECO:0007669"/>
    <property type="project" value="InterPro"/>
</dbReference>
<dbReference type="CDD" id="cd00959">
    <property type="entry name" value="DeoC"/>
    <property type="match status" value="1"/>
</dbReference>
<dbReference type="FunFam" id="3.20.20.70:FF:000044">
    <property type="entry name" value="Deoxyribose-phosphate aldolase"/>
    <property type="match status" value="1"/>
</dbReference>
<dbReference type="Gene3D" id="3.20.20.70">
    <property type="entry name" value="Aldolase class I"/>
    <property type="match status" value="1"/>
</dbReference>
<dbReference type="HAMAP" id="MF_00114">
    <property type="entry name" value="DeoC_type1"/>
    <property type="match status" value="1"/>
</dbReference>
<dbReference type="InterPro" id="IPR013785">
    <property type="entry name" value="Aldolase_TIM"/>
</dbReference>
<dbReference type="InterPro" id="IPR011343">
    <property type="entry name" value="DeoC"/>
</dbReference>
<dbReference type="InterPro" id="IPR002915">
    <property type="entry name" value="DeoC/FbaB/LacD_aldolase"/>
</dbReference>
<dbReference type="InterPro" id="IPR028581">
    <property type="entry name" value="DeoC_typeI"/>
</dbReference>
<dbReference type="NCBIfam" id="TIGR00126">
    <property type="entry name" value="deoC"/>
    <property type="match status" value="1"/>
</dbReference>
<dbReference type="PANTHER" id="PTHR10889">
    <property type="entry name" value="DEOXYRIBOSE-PHOSPHATE ALDOLASE"/>
    <property type="match status" value="1"/>
</dbReference>
<dbReference type="PANTHER" id="PTHR10889:SF1">
    <property type="entry name" value="DEOXYRIBOSE-PHOSPHATE ALDOLASE"/>
    <property type="match status" value="1"/>
</dbReference>
<dbReference type="Pfam" id="PF01791">
    <property type="entry name" value="DeoC"/>
    <property type="match status" value="1"/>
</dbReference>
<dbReference type="PIRSF" id="PIRSF001357">
    <property type="entry name" value="DeoC"/>
    <property type="match status" value="1"/>
</dbReference>
<dbReference type="SMART" id="SM01133">
    <property type="entry name" value="DeoC"/>
    <property type="match status" value="1"/>
</dbReference>
<dbReference type="SUPFAM" id="SSF51569">
    <property type="entry name" value="Aldolase"/>
    <property type="match status" value="1"/>
</dbReference>
<keyword id="KW-0963">Cytoplasm</keyword>
<keyword id="KW-0456">Lyase</keyword>
<keyword id="KW-1185">Reference proteome</keyword>
<keyword id="KW-0704">Schiff base</keyword>
<reference key="1">
    <citation type="journal article" date="2004" name="Genome Res.">
        <title>The complete genome and proteome of Mycoplasma mobile.</title>
        <authorList>
            <person name="Jaffe J.D."/>
            <person name="Stange-Thomann N."/>
            <person name="Smith C."/>
            <person name="DeCaprio D."/>
            <person name="Fisher S."/>
            <person name="Butler J."/>
            <person name="Calvo S."/>
            <person name="Elkins T."/>
            <person name="FitzGerald M.G."/>
            <person name="Hafez N."/>
            <person name="Kodira C.D."/>
            <person name="Major J."/>
            <person name="Wang S."/>
            <person name="Wilkinson J."/>
            <person name="Nicol R."/>
            <person name="Nusbaum C."/>
            <person name="Birren B."/>
            <person name="Berg H.C."/>
            <person name="Church G.M."/>
        </authorList>
    </citation>
    <scope>NUCLEOTIDE SEQUENCE [LARGE SCALE GENOMIC DNA]</scope>
    <source>
        <strain>ATCC 43663 / NCTC 11711 / 163 K</strain>
    </source>
</reference>
<name>DEOC_MYCM1</name>
<comment type="function">
    <text evidence="1">Catalyzes a reversible aldol reaction between acetaldehyde and D-glyceraldehyde 3-phosphate to generate 2-deoxy-D-ribose 5-phosphate.</text>
</comment>
<comment type="catalytic activity">
    <reaction evidence="1">
        <text>2-deoxy-D-ribose 5-phosphate = D-glyceraldehyde 3-phosphate + acetaldehyde</text>
        <dbReference type="Rhea" id="RHEA:12821"/>
        <dbReference type="ChEBI" id="CHEBI:15343"/>
        <dbReference type="ChEBI" id="CHEBI:59776"/>
        <dbReference type="ChEBI" id="CHEBI:62877"/>
        <dbReference type="EC" id="4.1.2.4"/>
    </reaction>
</comment>
<comment type="pathway">
    <text evidence="1">Carbohydrate degradation; 2-deoxy-D-ribose 1-phosphate degradation; D-glyceraldehyde 3-phosphate and acetaldehyde from 2-deoxy-alpha-D-ribose 1-phosphate: step 2/2.</text>
</comment>
<comment type="subcellular location">
    <subcellularLocation>
        <location evidence="1">Cytoplasm</location>
    </subcellularLocation>
</comment>
<comment type="similarity">
    <text evidence="1">Belongs to the DeoC/FbaB aldolase family. DeoC type 1 subfamily.</text>
</comment>
<feature type="chain" id="PRO_0000231554" description="Deoxyribose-phosphate aldolase">
    <location>
        <begin position="1"/>
        <end position="217"/>
    </location>
</feature>
<feature type="active site" description="Proton donor/acceptor" evidence="1">
    <location>
        <position position="89"/>
    </location>
</feature>
<feature type="active site" description="Schiff-base intermediate with acetaldehyde" evidence="1">
    <location>
        <position position="151"/>
    </location>
</feature>
<feature type="active site" description="Proton donor/acceptor" evidence="1">
    <location>
        <position position="180"/>
    </location>
</feature>
<gene>
    <name evidence="1" type="primary">deoC</name>
    <name type="ordered locus">MMOB5370</name>
</gene>
<proteinExistence type="inferred from homology"/>
<sequence>MKFNNMIDHTLLKAEATTKDVDKLIAEAKEYGFKSVCVNSSWVKYVKEKLKGSDVLVCAVVGFPLGAMSMQAKVFEAKLAIDHGADEIDMVINIGRFRDDQHDYVLNEIKKIKEVMGNKVLKVIIETALLDKKGIKDATNIVLQSGAEFIKTSTGFSYSGAQVEDIEVFKEILGDKVAIKASGGIKNLNDMKNLYKAGARRFGTSAAVAIVKEQGKQ</sequence>
<evidence type="ECO:0000255" key="1">
    <source>
        <dbReference type="HAMAP-Rule" id="MF_00114"/>
    </source>
</evidence>
<organism>
    <name type="scientific">Mycoplasma mobile (strain ATCC 43663 / 163K / NCTC 11711)</name>
    <name type="common">Mesomycoplasma mobile</name>
    <dbReference type="NCBI Taxonomy" id="267748"/>
    <lineage>
        <taxon>Bacteria</taxon>
        <taxon>Bacillati</taxon>
        <taxon>Mycoplasmatota</taxon>
        <taxon>Mycoplasmoidales</taxon>
        <taxon>Metamycoplasmataceae</taxon>
        <taxon>Mesomycoplasma</taxon>
    </lineage>
</organism>